<dbReference type="EC" id="2.5.1.7" evidence="1"/>
<dbReference type="EMBL" id="CP001050">
    <property type="protein sequence ID" value="ACF30939.1"/>
    <property type="molecule type" value="Genomic_DNA"/>
</dbReference>
<dbReference type="RefSeq" id="WP_003688069.1">
    <property type="nucleotide sequence ID" value="NC_011035.1"/>
</dbReference>
<dbReference type="SMR" id="B4RPR2"/>
<dbReference type="GeneID" id="66754198"/>
<dbReference type="KEGG" id="ngk:NGK_2335"/>
<dbReference type="HOGENOM" id="CLU_027387_0_0_4"/>
<dbReference type="UniPathway" id="UPA00219"/>
<dbReference type="Proteomes" id="UP000002564">
    <property type="component" value="Chromosome"/>
</dbReference>
<dbReference type="GO" id="GO:0005737">
    <property type="term" value="C:cytoplasm"/>
    <property type="evidence" value="ECO:0007669"/>
    <property type="project" value="UniProtKB-SubCell"/>
</dbReference>
<dbReference type="GO" id="GO:0008760">
    <property type="term" value="F:UDP-N-acetylglucosamine 1-carboxyvinyltransferase activity"/>
    <property type="evidence" value="ECO:0007669"/>
    <property type="project" value="UniProtKB-UniRule"/>
</dbReference>
<dbReference type="GO" id="GO:0051301">
    <property type="term" value="P:cell division"/>
    <property type="evidence" value="ECO:0007669"/>
    <property type="project" value="UniProtKB-KW"/>
</dbReference>
<dbReference type="GO" id="GO:0071555">
    <property type="term" value="P:cell wall organization"/>
    <property type="evidence" value="ECO:0007669"/>
    <property type="project" value="UniProtKB-KW"/>
</dbReference>
<dbReference type="GO" id="GO:0009252">
    <property type="term" value="P:peptidoglycan biosynthetic process"/>
    <property type="evidence" value="ECO:0007669"/>
    <property type="project" value="UniProtKB-UniRule"/>
</dbReference>
<dbReference type="GO" id="GO:0008360">
    <property type="term" value="P:regulation of cell shape"/>
    <property type="evidence" value="ECO:0007669"/>
    <property type="project" value="UniProtKB-KW"/>
</dbReference>
<dbReference type="GO" id="GO:0019277">
    <property type="term" value="P:UDP-N-acetylgalactosamine biosynthetic process"/>
    <property type="evidence" value="ECO:0007669"/>
    <property type="project" value="InterPro"/>
</dbReference>
<dbReference type="CDD" id="cd01555">
    <property type="entry name" value="UdpNAET"/>
    <property type="match status" value="1"/>
</dbReference>
<dbReference type="FunFam" id="3.65.10.10:FF:000002">
    <property type="entry name" value="UDP-N-acetylglucosamine 1-carboxyvinyltransferase"/>
    <property type="match status" value="1"/>
</dbReference>
<dbReference type="Gene3D" id="3.65.10.10">
    <property type="entry name" value="Enolpyruvate transferase domain"/>
    <property type="match status" value="2"/>
</dbReference>
<dbReference type="HAMAP" id="MF_00111">
    <property type="entry name" value="MurA"/>
    <property type="match status" value="1"/>
</dbReference>
<dbReference type="InterPro" id="IPR001986">
    <property type="entry name" value="Enolpyruvate_Tfrase_dom"/>
</dbReference>
<dbReference type="InterPro" id="IPR036968">
    <property type="entry name" value="Enolpyruvate_Tfrase_sf"/>
</dbReference>
<dbReference type="InterPro" id="IPR050068">
    <property type="entry name" value="MurA_subfamily"/>
</dbReference>
<dbReference type="InterPro" id="IPR013792">
    <property type="entry name" value="RNA3'P_cycl/enolpyr_Trfase_a/b"/>
</dbReference>
<dbReference type="InterPro" id="IPR005750">
    <property type="entry name" value="UDP_GlcNAc_COvinyl_MurA"/>
</dbReference>
<dbReference type="NCBIfam" id="TIGR01072">
    <property type="entry name" value="murA"/>
    <property type="match status" value="1"/>
</dbReference>
<dbReference type="NCBIfam" id="NF006873">
    <property type="entry name" value="PRK09369.1"/>
    <property type="match status" value="1"/>
</dbReference>
<dbReference type="PANTHER" id="PTHR43783">
    <property type="entry name" value="UDP-N-ACETYLGLUCOSAMINE 1-CARBOXYVINYLTRANSFERASE"/>
    <property type="match status" value="1"/>
</dbReference>
<dbReference type="PANTHER" id="PTHR43783:SF1">
    <property type="entry name" value="UDP-N-ACETYLGLUCOSAMINE 1-CARBOXYVINYLTRANSFERASE"/>
    <property type="match status" value="1"/>
</dbReference>
<dbReference type="Pfam" id="PF00275">
    <property type="entry name" value="EPSP_synthase"/>
    <property type="match status" value="1"/>
</dbReference>
<dbReference type="SUPFAM" id="SSF55205">
    <property type="entry name" value="EPT/RTPC-like"/>
    <property type="match status" value="1"/>
</dbReference>
<evidence type="ECO:0000255" key="1">
    <source>
        <dbReference type="HAMAP-Rule" id="MF_00111"/>
    </source>
</evidence>
<accession>B4RPR2</accession>
<proteinExistence type="inferred from homology"/>
<protein>
    <recommendedName>
        <fullName evidence="1">UDP-N-acetylglucosamine 1-carboxyvinyltransferase</fullName>
        <ecNumber evidence="1">2.5.1.7</ecNumber>
    </recommendedName>
    <alternativeName>
        <fullName evidence="1">Enoylpyruvate transferase</fullName>
    </alternativeName>
    <alternativeName>
        <fullName evidence="1">UDP-N-acetylglucosamine enolpyruvyl transferase</fullName>
        <shortName evidence="1">EPT</shortName>
    </alternativeName>
</protein>
<organism>
    <name type="scientific">Neisseria gonorrhoeae (strain NCCP11945)</name>
    <dbReference type="NCBI Taxonomy" id="521006"/>
    <lineage>
        <taxon>Bacteria</taxon>
        <taxon>Pseudomonadati</taxon>
        <taxon>Pseudomonadota</taxon>
        <taxon>Betaproteobacteria</taxon>
        <taxon>Neisseriales</taxon>
        <taxon>Neisseriaceae</taxon>
        <taxon>Neisseria</taxon>
    </lineage>
</organism>
<reference key="1">
    <citation type="journal article" date="2008" name="J. Bacteriol.">
        <title>Complete genome sequence of Neisseria gonorrhoeae NCCP11945.</title>
        <authorList>
            <person name="Chung G.T."/>
            <person name="Yoo J.S."/>
            <person name="Oh H.B."/>
            <person name="Lee Y.S."/>
            <person name="Cha S.H."/>
            <person name="Kim S.J."/>
            <person name="Yoo C.K."/>
        </authorList>
    </citation>
    <scope>NUCLEOTIDE SEQUENCE [LARGE SCALE GENOMIC DNA]</scope>
    <source>
        <strain>NCCP11945</strain>
    </source>
</reference>
<comment type="function">
    <text evidence="1">Cell wall formation. Adds enolpyruvyl to UDP-N-acetylglucosamine.</text>
</comment>
<comment type="catalytic activity">
    <reaction evidence="1">
        <text>phosphoenolpyruvate + UDP-N-acetyl-alpha-D-glucosamine = UDP-N-acetyl-3-O-(1-carboxyvinyl)-alpha-D-glucosamine + phosphate</text>
        <dbReference type="Rhea" id="RHEA:18681"/>
        <dbReference type="ChEBI" id="CHEBI:43474"/>
        <dbReference type="ChEBI" id="CHEBI:57705"/>
        <dbReference type="ChEBI" id="CHEBI:58702"/>
        <dbReference type="ChEBI" id="CHEBI:68483"/>
        <dbReference type="EC" id="2.5.1.7"/>
    </reaction>
</comment>
<comment type="pathway">
    <text evidence="1">Cell wall biogenesis; peptidoglycan biosynthesis.</text>
</comment>
<comment type="subcellular location">
    <subcellularLocation>
        <location evidence="1">Cytoplasm</location>
    </subcellularLocation>
</comment>
<comment type="similarity">
    <text evidence="1">Belongs to the EPSP synthase family. MurA subfamily.</text>
</comment>
<gene>
    <name evidence="1" type="primary">murA</name>
    <name type="ordered locus">NGK_2335</name>
</gene>
<sequence>MDKLKISANGPLNGEITVSGAKNAALPLMCAGLLTSGTLRLKNVPMLADVATTQKLLQGMGARVLTDNISEFEINGGTVNNTCAPYELVRTMRASILVLGPTLARFGEAQVSLPGGCAIGSRPVNQHLKGLEAMGAEIAIEHGYVKAKGKLKGARVAMDVVTVGGTENLLMAATLAEGTTVLENCAIEPEVVDLAECLVKMGAKISGIGTSTMIVEGAGELYGCEHSVVPDRIEAGTFLCAVAITGGRVVLRNAAPKTMEVVLDKLVEAGAVIEAGDDWIAIDMRQRPKAVDIRTVVHPGFPTDMQAQFMALNAVAEGSCRVVETIFENRFMHVPELNRMGANITTEGNTAFVQGVERLSGAVVKATDLRASASLVIAGLAARGETVVERIYHLDRGYENIEKKLGSVGANIERVSG</sequence>
<keyword id="KW-0131">Cell cycle</keyword>
<keyword id="KW-0132">Cell division</keyword>
<keyword id="KW-0133">Cell shape</keyword>
<keyword id="KW-0961">Cell wall biogenesis/degradation</keyword>
<keyword id="KW-0963">Cytoplasm</keyword>
<keyword id="KW-0573">Peptidoglycan synthesis</keyword>
<keyword id="KW-0670">Pyruvate</keyword>
<keyword id="KW-0808">Transferase</keyword>
<feature type="chain" id="PRO_1000094704" description="UDP-N-acetylglucosamine 1-carboxyvinyltransferase">
    <location>
        <begin position="1"/>
        <end position="417"/>
    </location>
</feature>
<feature type="active site" description="Proton donor" evidence="1">
    <location>
        <position position="117"/>
    </location>
</feature>
<feature type="binding site" evidence="1">
    <location>
        <begin position="22"/>
        <end position="23"/>
    </location>
    <ligand>
        <name>phosphoenolpyruvate</name>
        <dbReference type="ChEBI" id="CHEBI:58702"/>
    </ligand>
</feature>
<feature type="binding site" evidence="1">
    <location>
        <position position="93"/>
    </location>
    <ligand>
        <name>UDP-N-acetyl-alpha-D-glucosamine</name>
        <dbReference type="ChEBI" id="CHEBI:57705"/>
    </ligand>
</feature>
<feature type="binding site" evidence="1">
    <location>
        <position position="304"/>
    </location>
    <ligand>
        <name>UDP-N-acetyl-alpha-D-glucosamine</name>
        <dbReference type="ChEBI" id="CHEBI:57705"/>
    </ligand>
</feature>
<feature type="binding site" evidence="1">
    <location>
        <position position="326"/>
    </location>
    <ligand>
        <name>UDP-N-acetyl-alpha-D-glucosamine</name>
        <dbReference type="ChEBI" id="CHEBI:57705"/>
    </ligand>
</feature>
<feature type="modified residue" description="2-(S-cysteinyl)pyruvic acid O-phosphothioketal" evidence="1">
    <location>
        <position position="117"/>
    </location>
</feature>
<name>MURA_NEIG2</name>